<comment type="function">
    <text>Involved in the presentation of foreign antigens to the immune system.</text>
</comment>
<comment type="subunit">
    <text>Heterodimer of an alpha chain and a beta chain (beta-2-microglobulin).</text>
</comment>
<comment type="subcellular location">
    <subcellularLocation>
        <location>Membrane</location>
        <topology>Single-pass type I membrane protein</topology>
    </subcellularLocation>
</comment>
<comment type="alternative products">
    <event type="alternative splicing"/>
    <isoform>
        <id>P04223-1</id>
        <name>1</name>
        <sequence type="displayed"/>
    </isoform>
    <isoform>
        <id>P04223-2</id>
        <name>2</name>
        <sequence type="described" ref="VSP_011855"/>
    </isoform>
</comment>
<comment type="similarity">
    <text evidence="7">Belongs to the MHC class I family.</text>
</comment>
<keyword id="KW-0002">3D-structure</keyword>
<keyword id="KW-0025">Alternative splicing</keyword>
<keyword id="KW-1015">Disulfide bond</keyword>
<keyword id="KW-0325">Glycoprotein</keyword>
<keyword id="KW-0391">Immunity</keyword>
<keyword id="KW-0472">Membrane</keyword>
<keyword id="KW-0490">MHC I</keyword>
<keyword id="KW-0597">Phosphoprotein</keyword>
<keyword id="KW-1185">Reference proteome</keyword>
<keyword id="KW-0732">Signal</keyword>
<keyword id="KW-0812">Transmembrane</keyword>
<keyword id="KW-1133">Transmembrane helix</keyword>
<reference key="1">
    <citation type="journal article" date="1984" name="Nucleic Acids Res.">
        <title>Complete nucleotide sequence of the murine H-2Kk gene. Comparison of three H-2K locus alleles.</title>
        <authorList>
            <person name="Arnold B."/>
            <person name="Burgert H.-G."/>
            <person name="Archibald A.L."/>
            <person name="Kvist S."/>
        </authorList>
    </citation>
    <scope>NUCLEOTIDE SEQUENCE [GENOMIC DNA] (ISOFORM 1)</scope>
</reference>
<reference key="2">
    <citation type="journal article" date="1987" name="J. Immunol.">
        <title>DNA sequence analysis of the C3H H-2Kk and H-2Dk loci. Evolutionary relationships to H-2 genes from four other mouse strains.</title>
        <authorList>
            <person name="Watts S."/>
            <person name="Vogel J.M."/>
            <person name="Harriman W.D."/>
            <person name="Itoh T."/>
            <person name="Stauss H.J."/>
            <person name="Goodenow R.S."/>
        </authorList>
    </citation>
    <scope>NUCLEOTIDE SEQUENCE [GENOMIC DNA] (ISOFORM 1)</scope>
    <source>
        <strain>C3H/HeJ</strain>
    </source>
</reference>
<reference key="3">
    <citation type="journal article" date="1996" name="Ann. Transplant.">
        <title>Nucleotide sequences of three H-2K and three H-2D complementary DNA clones coding mouse class I MHC heavy chain proteins.</title>
        <authorList>
            <person name="Wang M."/>
            <person name="Stepkowski S.M."/>
            <person name="Hebert J.S."/>
            <person name="Tian L."/>
            <person name="Yu J."/>
            <person name="Kahan B.D."/>
        </authorList>
    </citation>
    <scope>NUCLEOTIDE SEQUENCE [MRNA] (ISOFORM 2)</scope>
    <source>
        <strain>C3H/HeJ</strain>
        <tissue>Splenocyte</tissue>
    </source>
</reference>
<reference key="4">
    <citation type="journal article" date="1988" name="Immunogenetics">
        <title>The nucleotide sequence of the H-2K gene of C3Hf/HeN mice.</title>
        <authorList>
            <person name="Minamide L.S."/>
            <person name="Callahan G.N."/>
            <person name="Grosveld F.G."/>
            <person name="Hui K.M."/>
        </authorList>
    </citation>
    <scope>NUCLEOTIDE SEQUENCE OF 1-359</scope>
    <source>
        <strain>C3H/HeN</strain>
    </source>
</reference>
<reference key="5">
    <citation type="journal article" date="1985" name="Gene">
        <title>Molecular cloning and sequencing of H-2Kk cDNA: comparison with other H-2 genes and evidence for alternative splicing.</title>
        <authorList>
            <person name="Reddy E.S."/>
            <person name="Pan J.Y."/>
        </authorList>
    </citation>
    <scope>NUCLEOTIDE SEQUENCE [MRNA] OF 13-369 (ISOFORM 2)</scope>
</reference>
<reference key="6">
    <citation type="journal article" date="1988" name="Mol. Immunol.">
        <title>The H-2Kkml mutation: a single nucleotide substitution is responsible for multiple functional differences in a class I MHC molecule.</title>
        <authorList>
            <person name="Martinko J.M."/>
            <person name="Solheim J.C."/>
            <person name="Geliebter J."/>
        </authorList>
    </citation>
    <scope>NUCLEOTIDE SEQUENCE OF 22-313</scope>
</reference>
<reference key="7">
    <citation type="journal article" date="2007" name="Proc. Natl. Acad. Sci. U.S.A.">
        <title>Large-scale phosphorylation analysis of mouse liver.</title>
        <authorList>
            <person name="Villen J."/>
            <person name="Beausoleil S.A."/>
            <person name="Gerber S.A."/>
            <person name="Gygi S.P."/>
        </authorList>
    </citation>
    <scope>PHOSPHORYLATION [LARGE SCALE ANALYSIS] AT SER-354</scope>
    <scope>IDENTIFICATION BY MASS SPECTROMETRY [LARGE SCALE ANALYSIS]</scope>
    <source>
        <tissue>Liver</tissue>
    </source>
</reference>
<reference key="8">
    <citation type="journal article" date="2009" name="Mol. Cell. Proteomics">
        <title>The mouse C2C12 myoblast cell surface N-linked glycoproteome: identification, glycosite occupancy, and membrane orientation.</title>
        <authorList>
            <person name="Gundry R.L."/>
            <person name="Raginski K."/>
            <person name="Tarasova Y."/>
            <person name="Tchernyshyov I."/>
            <person name="Bausch-Fluck D."/>
            <person name="Elliott S.T."/>
            <person name="Boheler K.R."/>
            <person name="Van Eyk J.E."/>
            <person name="Wollscheid B."/>
        </authorList>
    </citation>
    <scope>GLYCOSYLATION [LARGE SCALE ANALYSIS] AT ASN-107</scope>
    <source>
        <tissue>Myoblast</tissue>
    </source>
</reference>
<reference key="9">
    <citation type="journal article" date="2010" name="Cell">
        <title>A tissue-specific atlas of mouse protein phosphorylation and expression.</title>
        <authorList>
            <person name="Huttlin E.L."/>
            <person name="Jedrychowski M.P."/>
            <person name="Elias J.E."/>
            <person name="Goswami T."/>
            <person name="Rad R."/>
            <person name="Beausoleil S.A."/>
            <person name="Villen J."/>
            <person name="Haas W."/>
            <person name="Sowa M.E."/>
            <person name="Gygi S.P."/>
        </authorList>
    </citation>
    <scope>PHOSPHORYLATION [LARGE SCALE ANALYSIS] AT SER-354</scope>
    <scope>PHOSPHORYLATION [LARGE SCALE ANALYSIS] AT SER-351 AND SER-354 (ISOFORM 2)</scope>
    <scope>IDENTIFICATION BY MASS SPECTROMETRY [LARGE SCALE ANALYSIS]</scope>
    <source>
        <tissue>Brown adipose tissue</tissue>
        <tissue>Kidney</tissue>
        <tissue>Liver</tissue>
        <tissue>Lung</tissue>
        <tissue>Pancreas</tissue>
        <tissue>Spleen</tissue>
        <tissue>Testis</tissue>
    </source>
</reference>
<feature type="signal peptide">
    <location>
        <begin position="1"/>
        <end position="21"/>
    </location>
</feature>
<feature type="chain" id="PRO_0000018930" description="H-2 class I histocompatibility antigen, K-K alpha chain">
    <location>
        <begin position="22"/>
        <end position="369"/>
    </location>
</feature>
<feature type="topological domain" description="Extracellular" evidence="2">
    <location>
        <begin position="22"/>
        <end position="305"/>
    </location>
</feature>
<feature type="transmembrane region" description="Helical" evidence="2">
    <location>
        <begin position="306"/>
        <end position="328"/>
    </location>
</feature>
<feature type="topological domain" description="Cytoplasmic" evidence="2">
    <location>
        <begin position="329"/>
        <end position="369"/>
    </location>
</feature>
<feature type="domain" description="Ig-like C1-type">
    <location>
        <begin position="206"/>
        <end position="294"/>
    </location>
</feature>
<feature type="region of interest" description="Alpha-1">
    <location>
        <begin position="22"/>
        <end position="111"/>
    </location>
</feature>
<feature type="region of interest" description="Alpha-2">
    <location>
        <begin position="112"/>
        <end position="203"/>
    </location>
</feature>
<feature type="region of interest" description="Alpha-3">
    <location>
        <begin position="204"/>
        <end position="295"/>
    </location>
</feature>
<feature type="region of interest" description="Connecting peptide">
    <location>
        <begin position="296"/>
        <end position="305"/>
    </location>
</feature>
<feature type="modified residue" description="Phosphoserine" evidence="1">
    <location>
        <position position="351"/>
    </location>
</feature>
<feature type="modified residue" description="Phosphoserine" evidence="8 9">
    <location>
        <position position="354"/>
    </location>
</feature>
<feature type="glycosylation site" description="N-linked (GlcNAc...) asparagine" evidence="4">
    <location>
        <position position="107"/>
    </location>
</feature>
<feature type="glycosylation site" description="N-linked (GlcNAc...) asparagine" evidence="2">
    <location>
        <position position="197"/>
    </location>
</feature>
<feature type="disulfide bond" evidence="3">
    <location>
        <begin position="122"/>
        <end position="185"/>
    </location>
</feature>
<feature type="disulfide bond" evidence="3">
    <location>
        <begin position="224"/>
        <end position="280"/>
    </location>
</feature>
<feature type="splice variant" id="VSP_011855" description="In isoform 2." evidence="5 6">
    <original>VMVHDPHSLA</original>
    <variation>A</variation>
    <location>
        <begin position="360"/>
        <end position="369"/>
    </location>
</feature>
<feature type="sequence variant">
    <original>D</original>
    <variation>A</variation>
    <location>
        <position position="173"/>
    </location>
</feature>
<feature type="sequence conflict" description="In Ref. 5; AAA39654." evidence="7" ref="5">
    <original>D</original>
    <variation>E</variation>
    <location>
        <position position="50"/>
    </location>
</feature>
<feature type="sequence conflict" description="In Ref. 2; AAA53202." evidence="7" ref="2">
    <original>N</original>
    <variation>S</variation>
    <location>
        <position position="98"/>
    </location>
</feature>
<feature type="strand" evidence="10">
    <location>
        <begin position="23"/>
        <end position="33"/>
    </location>
</feature>
<feature type="turn" evidence="10">
    <location>
        <begin position="36"/>
        <end position="38"/>
    </location>
</feature>
<feature type="strand" evidence="10">
    <location>
        <begin position="42"/>
        <end position="49"/>
    </location>
</feature>
<feature type="strand" evidence="10">
    <location>
        <begin position="52"/>
        <end position="59"/>
    </location>
</feature>
<feature type="strand" evidence="10">
    <location>
        <begin position="61"/>
        <end position="63"/>
    </location>
</feature>
<feature type="strand" evidence="11">
    <location>
        <begin position="67"/>
        <end position="70"/>
    </location>
</feature>
<feature type="helix" evidence="10">
    <location>
        <begin position="71"/>
        <end position="73"/>
    </location>
</feature>
<feature type="helix" evidence="10">
    <location>
        <begin position="78"/>
        <end position="105"/>
    </location>
</feature>
<feature type="strand" evidence="10">
    <location>
        <begin position="110"/>
        <end position="112"/>
    </location>
</feature>
<feature type="strand" evidence="10">
    <location>
        <begin position="115"/>
        <end position="124"/>
    </location>
</feature>
<feature type="strand" evidence="10">
    <location>
        <begin position="128"/>
        <end position="139"/>
    </location>
</feature>
<feature type="strand" evidence="10">
    <location>
        <begin position="142"/>
        <end position="147"/>
    </location>
</feature>
<feature type="strand" evidence="10">
    <location>
        <begin position="154"/>
        <end position="158"/>
    </location>
</feature>
<feature type="helix" evidence="10">
    <location>
        <begin position="159"/>
        <end position="170"/>
    </location>
</feature>
<feature type="helix" evidence="10">
    <location>
        <begin position="173"/>
        <end position="182"/>
    </location>
</feature>
<feature type="helix" evidence="10">
    <location>
        <begin position="184"/>
        <end position="193"/>
    </location>
</feature>
<feature type="turn" evidence="11">
    <location>
        <begin position="196"/>
        <end position="199"/>
    </location>
</feature>
<feature type="strand" evidence="10">
    <location>
        <begin position="207"/>
        <end position="214"/>
    </location>
</feature>
<feature type="strand" evidence="10">
    <location>
        <begin position="216"/>
        <end position="232"/>
    </location>
</feature>
<feature type="strand" evidence="10">
    <location>
        <begin position="235"/>
        <end position="240"/>
    </location>
</feature>
<feature type="strand" evidence="11">
    <location>
        <begin position="249"/>
        <end position="251"/>
    </location>
</feature>
<feature type="strand" evidence="10">
    <location>
        <begin position="258"/>
        <end position="260"/>
    </location>
</feature>
<feature type="strand" evidence="10">
    <location>
        <begin position="262"/>
        <end position="271"/>
    </location>
</feature>
<feature type="helix" evidence="10">
    <location>
        <begin position="275"/>
        <end position="277"/>
    </location>
</feature>
<feature type="strand" evidence="10">
    <location>
        <begin position="278"/>
        <end position="283"/>
    </location>
</feature>
<feature type="strand" evidence="10">
    <location>
        <begin position="291"/>
        <end position="293"/>
    </location>
</feature>
<feature type="modified residue" description="Phosphoserine" evidence="9">
    <location sequence="P04223-2">
        <position position="351"/>
    </location>
</feature>
<feature type="modified residue" description="Phosphoserine" evidence="9">
    <location sequence="P04223-2">
        <position position="354"/>
    </location>
</feature>
<protein>
    <recommendedName>
        <fullName>H-2 class I histocompatibility antigen, K-K alpha chain</fullName>
        <shortName>H-2K(K)</shortName>
    </recommendedName>
</protein>
<evidence type="ECO:0000250" key="1">
    <source>
        <dbReference type="UniProtKB" id="P01900"/>
    </source>
</evidence>
<evidence type="ECO:0000255" key="2"/>
<evidence type="ECO:0000255" key="3">
    <source>
        <dbReference type="PROSITE-ProRule" id="PRU00114"/>
    </source>
</evidence>
<evidence type="ECO:0000269" key="4">
    <source>
    </source>
</evidence>
<evidence type="ECO:0000303" key="5">
    <source>
    </source>
</evidence>
<evidence type="ECO:0000303" key="6">
    <source>
    </source>
</evidence>
<evidence type="ECO:0000305" key="7"/>
<evidence type="ECO:0007744" key="8">
    <source>
    </source>
</evidence>
<evidence type="ECO:0007744" key="9">
    <source>
    </source>
</evidence>
<evidence type="ECO:0007829" key="10">
    <source>
        <dbReference type="PDB" id="1ZT1"/>
    </source>
</evidence>
<evidence type="ECO:0007829" key="11">
    <source>
        <dbReference type="PDB" id="1ZT7"/>
    </source>
</evidence>
<proteinExistence type="evidence at protein level"/>
<name>HA1K_MOUSE</name>
<organism>
    <name type="scientific">Mus musculus</name>
    <name type="common">Mouse</name>
    <dbReference type="NCBI Taxonomy" id="10090"/>
    <lineage>
        <taxon>Eukaryota</taxon>
        <taxon>Metazoa</taxon>
        <taxon>Chordata</taxon>
        <taxon>Craniata</taxon>
        <taxon>Vertebrata</taxon>
        <taxon>Euteleostomi</taxon>
        <taxon>Mammalia</taxon>
        <taxon>Eutheria</taxon>
        <taxon>Euarchontoglires</taxon>
        <taxon>Glires</taxon>
        <taxon>Rodentia</taxon>
        <taxon>Myomorpha</taxon>
        <taxon>Muroidea</taxon>
        <taxon>Muridae</taxon>
        <taxon>Murinae</taxon>
        <taxon>Mus</taxon>
        <taxon>Mus</taxon>
    </lineage>
</organism>
<accession>P04223</accession>
<accession>O19459</accession>
<accession>Q31165</accession>
<accession>Q31192</accession>
<accession>Q95458</accession>
<gene>
    <name type="primary">H2-K1</name>
    <name type="synonym">H2-K</name>
</gene>
<dbReference type="EMBL" id="X01652">
    <property type="protein sequence ID" value="CAA25816.1"/>
    <property type="molecule type" value="Genomic_DNA"/>
</dbReference>
<dbReference type="EMBL" id="M18525">
    <property type="protein sequence ID" value="AAA53202.1"/>
    <property type="molecule type" value="Genomic_DNA"/>
</dbReference>
<dbReference type="EMBL" id="U47330">
    <property type="protein sequence ID" value="AAB17608.1"/>
    <property type="molecule type" value="mRNA"/>
</dbReference>
<dbReference type="EMBL" id="M18964">
    <property type="protein sequence ID" value="AAA39568.1"/>
    <property type="molecule type" value="Genomic_DNA"/>
</dbReference>
<dbReference type="EMBL" id="M11975">
    <property type="protein sequence ID" value="AAA39654.1"/>
    <property type="molecule type" value="mRNA"/>
</dbReference>
<dbReference type="EMBL" id="M34932">
    <property type="protein sequence ID" value="AAA39596.1"/>
    <property type="molecule type" value="mRNA"/>
</dbReference>
<dbReference type="PIR" id="A02203">
    <property type="entry name" value="HLMSKK"/>
</dbReference>
<dbReference type="PDB" id="1ZT1">
    <property type="method" value="X-ray"/>
    <property type="resolution" value="2.50 A"/>
    <property type="chains" value="A=22-297"/>
</dbReference>
<dbReference type="PDB" id="1ZT7">
    <property type="method" value="X-ray"/>
    <property type="resolution" value="3.00 A"/>
    <property type="chains" value="A/C=22-296"/>
</dbReference>
<dbReference type="PDBsum" id="1ZT1"/>
<dbReference type="PDBsum" id="1ZT7"/>
<dbReference type="SMR" id="P04223"/>
<dbReference type="GlyCosmos" id="P04223">
    <property type="glycosylation" value="2 sites, No reported glycans"/>
</dbReference>
<dbReference type="iPTMnet" id="P04223"/>
<dbReference type="PhosphoSitePlus" id="P04223"/>
<dbReference type="SwissPalm" id="P04223"/>
<dbReference type="jPOST" id="P04223"/>
<dbReference type="PeptideAtlas" id="P04223"/>
<dbReference type="ProteomicsDB" id="270923">
    <molecule id="P04223-1"/>
</dbReference>
<dbReference type="ProteomicsDB" id="270924">
    <molecule id="P04223-2"/>
</dbReference>
<dbReference type="Pumba" id="P04223"/>
<dbReference type="AGR" id="MGI:95904"/>
<dbReference type="MGI" id="MGI:95904">
    <property type="gene designation" value="H2-K1"/>
</dbReference>
<dbReference type="ChiTaRS" id="H2-K1">
    <property type="organism name" value="mouse"/>
</dbReference>
<dbReference type="EvolutionaryTrace" id="P04223"/>
<dbReference type="Proteomes" id="UP000000589">
    <property type="component" value="Unplaced"/>
</dbReference>
<dbReference type="GO" id="GO:0009897">
    <property type="term" value="C:external side of plasma membrane"/>
    <property type="evidence" value="ECO:0000314"/>
    <property type="project" value="MGI"/>
</dbReference>
<dbReference type="GO" id="GO:0098553">
    <property type="term" value="C:lumenal side of endoplasmic reticulum membrane"/>
    <property type="evidence" value="ECO:0000304"/>
    <property type="project" value="Reactome"/>
</dbReference>
<dbReference type="GO" id="GO:0042612">
    <property type="term" value="C:MHC class I protein complex"/>
    <property type="evidence" value="ECO:0007669"/>
    <property type="project" value="UniProtKB-KW"/>
</dbReference>
<dbReference type="GO" id="GO:0030670">
    <property type="term" value="C:phagocytic vesicle membrane"/>
    <property type="evidence" value="ECO:0000304"/>
    <property type="project" value="Reactome"/>
</dbReference>
<dbReference type="GO" id="GO:0042605">
    <property type="term" value="F:peptide antigen binding"/>
    <property type="evidence" value="ECO:0000314"/>
    <property type="project" value="MGI"/>
</dbReference>
<dbReference type="GO" id="GO:0002485">
    <property type="term" value="P:antigen processing and presentation of endogenous peptide antigen via MHC class I via ER pathway, TAP-dependent"/>
    <property type="evidence" value="ECO:0000314"/>
    <property type="project" value="MGI"/>
</dbReference>
<dbReference type="GO" id="GO:0042590">
    <property type="term" value="P:antigen processing and presentation of exogenous peptide antigen via MHC class I"/>
    <property type="evidence" value="ECO:0000314"/>
    <property type="project" value="MGI"/>
</dbReference>
<dbReference type="GO" id="GO:0042742">
    <property type="term" value="P:defense response to bacterium"/>
    <property type="evidence" value="ECO:0000314"/>
    <property type="project" value="MGI"/>
</dbReference>
<dbReference type="GO" id="GO:0048839">
    <property type="term" value="P:inner ear development"/>
    <property type="evidence" value="ECO:0000314"/>
    <property type="project" value="MGI"/>
</dbReference>
<dbReference type="GO" id="GO:0010977">
    <property type="term" value="P:negative regulation of neuron projection development"/>
    <property type="evidence" value="ECO:0000314"/>
    <property type="project" value="MGI"/>
</dbReference>
<dbReference type="GO" id="GO:0001916">
    <property type="term" value="P:positive regulation of T cell mediated cytotoxicity"/>
    <property type="evidence" value="ECO:0000314"/>
    <property type="project" value="MGI"/>
</dbReference>
<dbReference type="GO" id="GO:0001913">
    <property type="term" value="P:T cell mediated cytotoxicity"/>
    <property type="evidence" value="ECO:0000314"/>
    <property type="project" value="MGI"/>
</dbReference>
<dbReference type="FunFam" id="2.60.40.10:FF:000014">
    <property type="entry name" value="H-2 class I histocompatibility antigen, alpha chain"/>
    <property type="match status" value="1"/>
</dbReference>
<dbReference type="FunFam" id="3.30.500.10:FF:000001">
    <property type="entry name" value="H-2 class I histocompatibility antigen, alpha chain"/>
    <property type="match status" value="1"/>
</dbReference>
<dbReference type="Gene3D" id="2.60.40.10">
    <property type="entry name" value="Immunoglobulins"/>
    <property type="match status" value="1"/>
</dbReference>
<dbReference type="Gene3D" id="3.30.500.10">
    <property type="entry name" value="MHC class I-like antigen recognition-like"/>
    <property type="match status" value="1"/>
</dbReference>
<dbReference type="InterPro" id="IPR007110">
    <property type="entry name" value="Ig-like_dom"/>
</dbReference>
<dbReference type="InterPro" id="IPR036179">
    <property type="entry name" value="Ig-like_dom_sf"/>
</dbReference>
<dbReference type="InterPro" id="IPR013783">
    <property type="entry name" value="Ig-like_fold"/>
</dbReference>
<dbReference type="InterPro" id="IPR003006">
    <property type="entry name" value="Ig/MHC_CS"/>
</dbReference>
<dbReference type="InterPro" id="IPR003597">
    <property type="entry name" value="Ig_C1-set"/>
</dbReference>
<dbReference type="InterPro" id="IPR050208">
    <property type="entry name" value="MHC_class-I_related"/>
</dbReference>
<dbReference type="InterPro" id="IPR011161">
    <property type="entry name" value="MHC_I-like_Ag-recog"/>
</dbReference>
<dbReference type="InterPro" id="IPR037055">
    <property type="entry name" value="MHC_I-like_Ag-recog_sf"/>
</dbReference>
<dbReference type="InterPro" id="IPR011162">
    <property type="entry name" value="MHC_I/II-like_Ag-recog"/>
</dbReference>
<dbReference type="InterPro" id="IPR001039">
    <property type="entry name" value="MHC_I_a_a1/a2"/>
</dbReference>
<dbReference type="InterPro" id="IPR010579">
    <property type="entry name" value="MHC_I_a_C"/>
</dbReference>
<dbReference type="PANTHER" id="PTHR16675:SF251">
    <property type="entry name" value="HLA CLASS I HISTOCOMPATIBILITY ANTIGEN, C ALPHA CHAIN"/>
    <property type="match status" value="1"/>
</dbReference>
<dbReference type="PANTHER" id="PTHR16675">
    <property type="entry name" value="MHC CLASS I-RELATED"/>
    <property type="match status" value="1"/>
</dbReference>
<dbReference type="Pfam" id="PF07654">
    <property type="entry name" value="C1-set"/>
    <property type="match status" value="1"/>
</dbReference>
<dbReference type="Pfam" id="PF00129">
    <property type="entry name" value="MHC_I"/>
    <property type="match status" value="1"/>
</dbReference>
<dbReference type="Pfam" id="PF06623">
    <property type="entry name" value="MHC_I_C"/>
    <property type="match status" value="1"/>
</dbReference>
<dbReference type="PRINTS" id="PR01638">
    <property type="entry name" value="MHCCLASSI"/>
</dbReference>
<dbReference type="SMART" id="SM00407">
    <property type="entry name" value="IGc1"/>
    <property type="match status" value="1"/>
</dbReference>
<dbReference type="SUPFAM" id="SSF48726">
    <property type="entry name" value="Immunoglobulin"/>
    <property type="match status" value="1"/>
</dbReference>
<dbReference type="SUPFAM" id="SSF54452">
    <property type="entry name" value="MHC antigen-recognition domain"/>
    <property type="match status" value="1"/>
</dbReference>
<dbReference type="PROSITE" id="PS50835">
    <property type="entry name" value="IG_LIKE"/>
    <property type="match status" value="1"/>
</dbReference>
<dbReference type="PROSITE" id="PS00290">
    <property type="entry name" value="IG_MHC"/>
    <property type="match status" value="1"/>
</dbReference>
<sequence>MAPCMLLLLLAAALAPTQTRAGPHSLRYFHTAVSRPGLGKPRFISVGYVDDTQFVRFDSDAENPRYEPRVRWMEQVEPEYWERNTQIAKGNEQIFRVNLRTALRYYNQSAGGSHTFQRMYGCEVGSDWRLLRGYEQYAYDGCDYIALNEDLKTWTAADMAALITKHKWEQAGDAERDRAYLEGTCVEWLRRYLQLGNATLPRTDSPKAHVTRHSRPEDKVTLRCWALGFYPADITLTWQLNGEELTQDMELVETRPAGDGTFQKWASVVVPLGKEQYYTCHVYHQGLPEPLTLRWEPPPSTVSNTVIIAVLVVLGAAIVTGAVVAFVMKMRRRNTGGKGGDYALAPGSQTSDLSLPDCKVMVHDPHSLA</sequence>